<sequence length="405" mass="44266">MANIVVKRLERTPIDETPVEIVERKGIGHPDSICDGVAESVSVALCKMYKEKMGVVLHHNTDQVELVGGYAYPELGGGCMVSPIYILLSGRATMEVLDKESGKIIKLPVNTTAVNAARDYLKKALRNMDLEKDVVVDCRIGQGSVDLVEVFDRKRSEIPHANDTSFGVGHAPLSTTEKIVLETEKLLNSDALKAEIPAVGEDIKVMGLREGKKITLTIAMAAVDKYVNSCADYVKVKELAKAKVEENAKKYLDGHELEVCINTADDDEDCIFLTVTGTSAEMGDDGSVGRGNRANGLITPFRPMSMEATSGKNPINHIGKIYNILSNIIAEDVAKIEGVRECQIRILSQIGKPITEPKILDIEMIPENGFELEDLSPKAKEIAQKWLDNITEVTERIVSGNVTTF</sequence>
<keyword id="KW-0067">ATP-binding</keyword>
<keyword id="KW-0460">Magnesium</keyword>
<keyword id="KW-0547">Nucleotide-binding</keyword>
<keyword id="KW-0554">One-carbon metabolism</keyword>
<keyword id="KW-0808">Transferase</keyword>
<reference key="1">
    <citation type="submission" date="2007-06" db="EMBL/GenBank/DDBJ databases">
        <title>Complete sequence of Methanococcus maripaludis C7.</title>
        <authorList>
            <consortium name="US DOE Joint Genome Institute"/>
            <person name="Copeland A."/>
            <person name="Lucas S."/>
            <person name="Lapidus A."/>
            <person name="Barry K."/>
            <person name="Glavina del Rio T."/>
            <person name="Dalin E."/>
            <person name="Tice H."/>
            <person name="Pitluck S."/>
            <person name="Clum A."/>
            <person name="Schmutz J."/>
            <person name="Larimer F."/>
            <person name="Land M."/>
            <person name="Hauser L."/>
            <person name="Kyrpides N."/>
            <person name="Anderson I."/>
            <person name="Sieprawska-Lupa M."/>
            <person name="Whitman W.B."/>
            <person name="Richardson P."/>
        </authorList>
    </citation>
    <scope>NUCLEOTIDE SEQUENCE [LARGE SCALE GENOMIC DNA]</scope>
    <source>
        <strain>C7 / ATCC BAA-1331</strain>
    </source>
</reference>
<proteinExistence type="inferred from homology"/>
<gene>
    <name evidence="1" type="primary">mat</name>
    <name type="ordered locus">MmarC7_0913</name>
</gene>
<comment type="function">
    <text evidence="1">Catalyzes the formation of S-adenosylmethionine from methionine and ATP.</text>
</comment>
<comment type="catalytic activity">
    <reaction evidence="1">
        <text>L-methionine + ATP + H2O = S-adenosyl-L-methionine + phosphate + diphosphate</text>
        <dbReference type="Rhea" id="RHEA:21080"/>
        <dbReference type="ChEBI" id="CHEBI:15377"/>
        <dbReference type="ChEBI" id="CHEBI:30616"/>
        <dbReference type="ChEBI" id="CHEBI:33019"/>
        <dbReference type="ChEBI" id="CHEBI:43474"/>
        <dbReference type="ChEBI" id="CHEBI:57844"/>
        <dbReference type="ChEBI" id="CHEBI:59789"/>
        <dbReference type="EC" id="2.5.1.6"/>
    </reaction>
</comment>
<comment type="cofactor">
    <cofactor evidence="1">
        <name>Mg(2+)</name>
        <dbReference type="ChEBI" id="CHEBI:18420"/>
    </cofactor>
</comment>
<comment type="pathway">
    <text evidence="1">Amino-acid biosynthesis; S-adenosyl-L-methionine biosynthesis; S-adenosyl-L-methionine from L-methionine: step 1/1.</text>
</comment>
<comment type="similarity">
    <text evidence="1">Belongs to the AdoMet synthase 2 family.</text>
</comment>
<name>METK_METM7</name>
<organism>
    <name type="scientific">Methanococcus maripaludis (strain C7 / ATCC BAA-1331)</name>
    <dbReference type="NCBI Taxonomy" id="426368"/>
    <lineage>
        <taxon>Archaea</taxon>
        <taxon>Methanobacteriati</taxon>
        <taxon>Methanobacteriota</taxon>
        <taxon>Methanomada group</taxon>
        <taxon>Methanococci</taxon>
        <taxon>Methanococcales</taxon>
        <taxon>Methanococcaceae</taxon>
        <taxon>Methanococcus</taxon>
    </lineage>
</organism>
<feature type="chain" id="PRO_1000018655" description="S-adenosylmethionine synthase">
    <location>
        <begin position="1"/>
        <end position="405"/>
    </location>
</feature>
<feature type="binding site" evidence="1">
    <location>
        <begin position="141"/>
        <end position="146"/>
    </location>
    <ligand>
        <name>ATP</name>
        <dbReference type="ChEBI" id="CHEBI:30616"/>
    </ligand>
</feature>
<evidence type="ECO:0000255" key="1">
    <source>
        <dbReference type="HAMAP-Rule" id="MF_00136"/>
    </source>
</evidence>
<protein>
    <recommendedName>
        <fullName evidence="1">S-adenosylmethionine synthase</fullName>
        <shortName evidence="1">AdoMet synthase</shortName>
        <ecNumber evidence="1">2.5.1.6</ecNumber>
    </recommendedName>
    <alternativeName>
        <fullName evidence="1">Methionine adenosyltransferase</fullName>
    </alternativeName>
</protein>
<accession>A6VHQ4</accession>
<dbReference type="EC" id="2.5.1.6" evidence="1"/>
<dbReference type="EMBL" id="CP000745">
    <property type="protein sequence ID" value="ABR65980.1"/>
    <property type="molecule type" value="Genomic_DNA"/>
</dbReference>
<dbReference type="SMR" id="A6VHQ4"/>
<dbReference type="STRING" id="426368.MmarC7_0913"/>
<dbReference type="KEGG" id="mmz:MmarC7_0913"/>
<dbReference type="eggNOG" id="arCOG01678">
    <property type="taxonomic scope" value="Archaea"/>
</dbReference>
<dbReference type="HOGENOM" id="CLU_057642_0_0_2"/>
<dbReference type="OrthoDB" id="204488at2157"/>
<dbReference type="UniPathway" id="UPA00315">
    <property type="reaction ID" value="UER00080"/>
</dbReference>
<dbReference type="GO" id="GO:0005524">
    <property type="term" value="F:ATP binding"/>
    <property type="evidence" value="ECO:0007669"/>
    <property type="project" value="UniProtKB-UniRule"/>
</dbReference>
<dbReference type="GO" id="GO:0000287">
    <property type="term" value="F:magnesium ion binding"/>
    <property type="evidence" value="ECO:0007669"/>
    <property type="project" value="UniProtKB-UniRule"/>
</dbReference>
<dbReference type="GO" id="GO:0004478">
    <property type="term" value="F:methionine adenosyltransferase activity"/>
    <property type="evidence" value="ECO:0007669"/>
    <property type="project" value="UniProtKB-UniRule"/>
</dbReference>
<dbReference type="GO" id="GO:0006730">
    <property type="term" value="P:one-carbon metabolic process"/>
    <property type="evidence" value="ECO:0007669"/>
    <property type="project" value="UniProtKB-KW"/>
</dbReference>
<dbReference type="GO" id="GO:0006556">
    <property type="term" value="P:S-adenosylmethionine biosynthetic process"/>
    <property type="evidence" value="ECO:0007669"/>
    <property type="project" value="UniProtKB-UniRule"/>
</dbReference>
<dbReference type="Gene3D" id="3.30.300.10">
    <property type="match status" value="1"/>
</dbReference>
<dbReference type="Gene3D" id="3.30.300.280">
    <property type="entry name" value="S-adenosylmethionine synthetase, C-terminal domain"/>
    <property type="match status" value="2"/>
</dbReference>
<dbReference type="HAMAP" id="MF_00136">
    <property type="entry name" value="S_AdoMet_synth2"/>
    <property type="match status" value="1"/>
</dbReference>
<dbReference type="InterPro" id="IPR027790">
    <property type="entry name" value="AdoMet_synthase_2_family"/>
</dbReference>
<dbReference type="InterPro" id="IPR042544">
    <property type="entry name" value="AdoMet_synthase_3"/>
</dbReference>
<dbReference type="InterPro" id="IPR002795">
    <property type="entry name" value="S-AdoMet_synthetase_arc"/>
</dbReference>
<dbReference type="NCBIfam" id="NF003364">
    <property type="entry name" value="PRK04439.1-3"/>
    <property type="match status" value="1"/>
</dbReference>
<dbReference type="NCBIfam" id="NF003366">
    <property type="entry name" value="PRK04439.1-5"/>
    <property type="match status" value="1"/>
</dbReference>
<dbReference type="PANTHER" id="PTHR36697">
    <property type="entry name" value="S-ADENOSYLMETHIONINE SYNTHASE"/>
    <property type="match status" value="1"/>
</dbReference>
<dbReference type="PANTHER" id="PTHR36697:SF1">
    <property type="entry name" value="S-ADENOSYLMETHIONINE SYNTHASE"/>
    <property type="match status" value="1"/>
</dbReference>
<dbReference type="Pfam" id="PF01941">
    <property type="entry name" value="AdoMet_Synthase"/>
    <property type="match status" value="1"/>
</dbReference>